<gene>
    <name type="primary">fdxH</name>
    <name type="ordered locus">all1430</name>
</gene>
<sequence length="99" mass="10949">MASYQVRLINKKQDIDTTIEIDEETTILDGAEENGIELPFSCHSGSCSSCVGKVVEGEVDQSDQIFLDDEQMGKGFALLCVTYPRSNCTIKTHQEPYLA</sequence>
<feature type="initiator methionine" description="Removed">
    <location>
        <position position="1"/>
    </location>
</feature>
<feature type="chain" id="PRO_0000189301" description="Ferredoxin, heterocyst">
    <location>
        <begin position="2"/>
        <end position="99"/>
    </location>
</feature>
<feature type="domain" description="2Fe-2S ferredoxin-type" evidence="1">
    <location>
        <begin position="4"/>
        <end position="96"/>
    </location>
</feature>
<feature type="binding site" evidence="1 2">
    <location>
        <position position="42"/>
    </location>
    <ligand>
        <name>[2Fe-2S] cluster</name>
        <dbReference type="ChEBI" id="CHEBI:190135"/>
    </ligand>
</feature>
<feature type="binding site" evidence="1 2">
    <location>
        <position position="47"/>
    </location>
    <ligand>
        <name>[2Fe-2S] cluster</name>
        <dbReference type="ChEBI" id="CHEBI:190135"/>
    </ligand>
</feature>
<feature type="binding site" evidence="1 2">
    <location>
        <position position="50"/>
    </location>
    <ligand>
        <name>[2Fe-2S] cluster</name>
        <dbReference type="ChEBI" id="CHEBI:190135"/>
    </ligand>
</feature>
<feature type="binding site" evidence="1 2">
    <location>
        <position position="80"/>
    </location>
    <ligand>
        <name>[2Fe-2S] cluster</name>
        <dbReference type="ChEBI" id="CHEBI:190135"/>
    </ligand>
</feature>
<feature type="strand" evidence="4">
    <location>
        <begin position="3"/>
        <end position="10"/>
    </location>
</feature>
<feature type="turn" evidence="4">
    <location>
        <begin position="11"/>
        <end position="14"/>
    </location>
</feature>
<feature type="strand" evidence="4">
    <location>
        <begin position="15"/>
        <end position="22"/>
    </location>
</feature>
<feature type="helix" evidence="4">
    <location>
        <begin position="27"/>
        <end position="33"/>
    </location>
</feature>
<feature type="strand" evidence="4">
    <location>
        <begin position="41"/>
        <end position="48"/>
    </location>
</feature>
<feature type="strand" evidence="4">
    <location>
        <begin position="51"/>
        <end position="57"/>
    </location>
</feature>
<feature type="helix" evidence="4">
    <location>
        <begin position="69"/>
        <end position="73"/>
    </location>
</feature>
<feature type="strand" evidence="4">
    <location>
        <begin position="76"/>
        <end position="78"/>
    </location>
</feature>
<feature type="helix" evidence="4">
    <location>
        <begin position="79"/>
        <end position="81"/>
    </location>
</feature>
<feature type="strand" evidence="4">
    <location>
        <begin position="83"/>
        <end position="91"/>
    </location>
</feature>
<feature type="helix" evidence="4">
    <location>
        <begin position="95"/>
        <end position="97"/>
    </location>
</feature>
<proteinExistence type="evidence at protein level"/>
<keyword id="KW-0001">2Fe-2S</keyword>
<keyword id="KW-0002">3D-structure</keyword>
<keyword id="KW-0249">Electron transport</keyword>
<keyword id="KW-0364">Heterocyst</keyword>
<keyword id="KW-0408">Iron</keyword>
<keyword id="KW-0411">Iron-sulfur</keyword>
<keyword id="KW-0479">Metal-binding</keyword>
<keyword id="KW-0535">Nitrogen fixation</keyword>
<keyword id="KW-1185">Reference proteome</keyword>
<keyword id="KW-0813">Transport</keyword>
<dbReference type="EMBL" id="X13522">
    <property type="protein sequence ID" value="CAA31873.1"/>
    <property type="molecule type" value="Genomic_DNA"/>
</dbReference>
<dbReference type="EMBL" id="BA000019">
    <property type="protein sequence ID" value="BAB73387.1"/>
    <property type="molecule type" value="Genomic_DNA"/>
</dbReference>
<dbReference type="PIR" id="AC1985">
    <property type="entry name" value="AC1985"/>
</dbReference>
<dbReference type="PIR" id="S04543">
    <property type="entry name" value="S04543"/>
</dbReference>
<dbReference type="RefSeq" id="WP_010995602.1">
    <property type="nucleotide sequence ID" value="NZ_RSCN01000040.1"/>
</dbReference>
<dbReference type="PDB" id="1FRD">
    <property type="method" value="X-ray"/>
    <property type="resolution" value="1.70 A"/>
    <property type="chains" value="A=2-99"/>
</dbReference>
<dbReference type="PDBsum" id="1FRD"/>
<dbReference type="SMR" id="P11053"/>
<dbReference type="STRING" id="103690.gene:10493445"/>
<dbReference type="KEGG" id="ana:all1430"/>
<dbReference type="eggNOG" id="COG0633">
    <property type="taxonomic scope" value="Bacteria"/>
</dbReference>
<dbReference type="OrthoDB" id="462043at2"/>
<dbReference type="EvolutionaryTrace" id="P11053"/>
<dbReference type="Proteomes" id="UP000002483">
    <property type="component" value="Chromosome"/>
</dbReference>
<dbReference type="GO" id="GO:0051537">
    <property type="term" value="F:2 iron, 2 sulfur cluster binding"/>
    <property type="evidence" value="ECO:0007669"/>
    <property type="project" value="UniProtKB-KW"/>
</dbReference>
<dbReference type="GO" id="GO:0009055">
    <property type="term" value="F:electron transfer activity"/>
    <property type="evidence" value="ECO:0007669"/>
    <property type="project" value="InterPro"/>
</dbReference>
<dbReference type="GO" id="GO:0046872">
    <property type="term" value="F:metal ion binding"/>
    <property type="evidence" value="ECO:0007669"/>
    <property type="project" value="UniProtKB-KW"/>
</dbReference>
<dbReference type="GO" id="GO:0022900">
    <property type="term" value="P:electron transport chain"/>
    <property type="evidence" value="ECO:0007669"/>
    <property type="project" value="InterPro"/>
</dbReference>
<dbReference type="GO" id="GO:0043158">
    <property type="term" value="P:heterocyst development"/>
    <property type="evidence" value="ECO:0007669"/>
    <property type="project" value="UniProtKB-KW"/>
</dbReference>
<dbReference type="GO" id="GO:0009399">
    <property type="term" value="P:nitrogen fixation"/>
    <property type="evidence" value="ECO:0007669"/>
    <property type="project" value="UniProtKB-KW"/>
</dbReference>
<dbReference type="CDD" id="cd00207">
    <property type="entry name" value="fer2"/>
    <property type="match status" value="1"/>
</dbReference>
<dbReference type="Gene3D" id="3.10.20.30">
    <property type="match status" value="1"/>
</dbReference>
<dbReference type="InterPro" id="IPR036010">
    <property type="entry name" value="2Fe-2S_ferredoxin-like_sf"/>
</dbReference>
<dbReference type="InterPro" id="IPR001041">
    <property type="entry name" value="2Fe-2S_ferredoxin-type"/>
</dbReference>
<dbReference type="InterPro" id="IPR006058">
    <property type="entry name" value="2Fe2S_fd_BS"/>
</dbReference>
<dbReference type="InterPro" id="IPR012675">
    <property type="entry name" value="Beta-grasp_dom_sf"/>
</dbReference>
<dbReference type="InterPro" id="IPR010241">
    <property type="entry name" value="Fd_pln"/>
</dbReference>
<dbReference type="NCBIfam" id="TIGR02008">
    <property type="entry name" value="fdx_plant"/>
    <property type="match status" value="1"/>
</dbReference>
<dbReference type="PANTHER" id="PTHR43112">
    <property type="entry name" value="FERREDOXIN"/>
    <property type="match status" value="1"/>
</dbReference>
<dbReference type="PANTHER" id="PTHR43112:SF3">
    <property type="entry name" value="FERREDOXIN-2, CHLOROPLASTIC"/>
    <property type="match status" value="1"/>
</dbReference>
<dbReference type="Pfam" id="PF00111">
    <property type="entry name" value="Fer2"/>
    <property type="match status" value="1"/>
</dbReference>
<dbReference type="SUPFAM" id="SSF54292">
    <property type="entry name" value="2Fe-2S ferredoxin-like"/>
    <property type="match status" value="1"/>
</dbReference>
<dbReference type="PROSITE" id="PS00197">
    <property type="entry name" value="2FE2S_FER_1"/>
    <property type="match status" value="1"/>
</dbReference>
<dbReference type="PROSITE" id="PS51085">
    <property type="entry name" value="2FE2S_FER_2"/>
    <property type="match status" value="1"/>
</dbReference>
<accession>P11053</accession>
<comment type="function">
    <text>Ferredoxins are iron-sulfur proteins that transfer electrons in a wide variety of metabolic reactions. Donates electrons to the nitrogenase.</text>
</comment>
<comment type="cofactor">
    <cofactor>
        <name>[2Fe-2S] cluster</name>
        <dbReference type="ChEBI" id="CHEBI:190135"/>
    </cofactor>
    <text>Binds 1 [2Fe-2S] cluster.</text>
</comment>
<comment type="miscellaneous">
    <text>This ferredoxin is expressed by heterocysts and differs from the ferredoxin expressed in vegetative cells.</text>
</comment>
<comment type="similarity">
    <text evidence="3">Belongs to the 2Fe2S plant-type ferredoxin family.</text>
</comment>
<protein>
    <recommendedName>
        <fullName>Ferredoxin, heterocyst</fullName>
    </recommendedName>
</protein>
<name>FERH_NOSS1</name>
<organism>
    <name type="scientific">Nostoc sp. (strain PCC 7120 / SAG 25.82 / UTEX 2576)</name>
    <dbReference type="NCBI Taxonomy" id="103690"/>
    <lineage>
        <taxon>Bacteria</taxon>
        <taxon>Bacillati</taxon>
        <taxon>Cyanobacteriota</taxon>
        <taxon>Cyanophyceae</taxon>
        <taxon>Nostocales</taxon>
        <taxon>Nostocaceae</taxon>
        <taxon>Nostoc</taxon>
    </lineage>
</organism>
<reference key="1">
    <citation type="journal article" date="1988" name="Mol. Gen. Genet.">
        <title>Molecular cloning and nucleotide sequence analysis of the gene coding for heterocyst ferredoxin from the cyanobacterium Anabaena sp. strain PCC 7120.</title>
        <authorList>
            <person name="Boehme H."/>
            <person name="Haselkorn R."/>
        </authorList>
    </citation>
    <scope>NUCLEOTIDE SEQUENCE [GENOMIC DNA]</scope>
</reference>
<reference key="2">
    <citation type="journal article" date="2001" name="DNA Res.">
        <title>Complete genomic sequence of the filamentous nitrogen-fixing cyanobacterium Anabaena sp. strain PCC 7120.</title>
        <authorList>
            <person name="Kaneko T."/>
            <person name="Nakamura Y."/>
            <person name="Wolk C.P."/>
            <person name="Kuritz T."/>
            <person name="Sasamoto S."/>
            <person name="Watanabe A."/>
            <person name="Iriguchi M."/>
            <person name="Ishikawa A."/>
            <person name="Kawashima K."/>
            <person name="Kimura T."/>
            <person name="Kishida Y."/>
            <person name="Kohara M."/>
            <person name="Matsumoto M."/>
            <person name="Matsuno A."/>
            <person name="Muraki A."/>
            <person name="Nakazaki N."/>
            <person name="Shimpo S."/>
            <person name="Sugimoto M."/>
            <person name="Takazawa M."/>
            <person name="Yamada M."/>
            <person name="Yasuda M."/>
            <person name="Tabata S."/>
        </authorList>
    </citation>
    <scope>NUCLEOTIDE SEQUENCE [LARGE SCALE GENOMIC DNA]</scope>
    <source>
        <strain>PCC 7120 / SAG 25.82 / UTEX 2576</strain>
    </source>
</reference>
<reference key="3">
    <citation type="journal article" date="1993" name="Biochemistry">
        <title>Molecular structure of the oxidized, recombinant, heterocyst [2Fe-2S] ferredoxin from Anabaena 7120 determined to 1.7-A resolution.</title>
        <authorList>
            <person name="Jacobson B.L."/>
            <person name="Chae Y.K."/>
            <person name="Markley J.L."/>
            <person name="Rayment I."/>
            <person name="Holden H.M."/>
        </authorList>
    </citation>
    <scope>X-RAY CRYSTALLOGRAPHY (1.7 ANGSTROMS)</scope>
</reference>
<evidence type="ECO:0000255" key="1">
    <source>
        <dbReference type="PROSITE-ProRule" id="PRU00465"/>
    </source>
</evidence>
<evidence type="ECO:0000269" key="2">
    <source>
    </source>
</evidence>
<evidence type="ECO:0000305" key="3"/>
<evidence type="ECO:0007829" key="4">
    <source>
        <dbReference type="PDB" id="1FRD"/>
    </source>
</evidence>